<comment type="function">
    <text evidence="1">Involved in mRNA degradation. Catalyzes the phosphorolysis of single-stranded polyribonucleotides processively in the 3'- to 5'-direction.</text>
</comment>
<comment type="catalytic activity">
    <reaction evidence="1">
        <text>RNA(n+1) + phosphate = RNA(n) + a ribonucleoside 5'-diphosphate</text>
        <dbReference type="Rhea" id="RHEA:22096"/>
        <dbReference type="Rhea" id="RHEA-COMP:14527"/>
        <dbReference type="Rhea" id="RHEA-COMP:17342"/>
        <dbReference type="ChEBI" id="CHEBI:43474"/>
        <dbReference type="ChEBI" id="CHEBI:57930"/>
        <dbReference type="ChEBI" id="CHEBI:140395"/>
        <dbReference type="EC" id="2.7.7.8"/>
    </reaction>
</comment>
<comment type="cofactor">
    <cofactor evidence="1">
        <name>Mg(2+)</name>
        <dbReference type="ChEBI" id="CHEBI:18420"/>
    </cofactor>
</comment>
<comment type="subunit">
    <text evidence="1">Component of the RNA degradosome, which is a multiprotein complex involved in RNA processing and mRNA degradation.</text>
</comment>
<comment type="subcellular location">
    <subcellularLocation>
        <location evidence="1">Cytoplasm</location>
    </subcellularLocation>
</comment>
<comment type="similarity">
    <text evidence="1">Belongs to the polyribonucleotide nucleotidyltransferase family.</text>
</comment>
<feature type="chain" id="PRO_0000329792" description="Polyribonucleotide nucleotidyltransferase">
    <location>
        <begin position="1"/>
        <end position="704"/>
    </location>
</feature>
<feature type="domain" description="KH" evidence="1">
    <location>
        <begin position="558"/>
        <end position="617"/>
    </location>
</feature>
<feature type="domain" description="S1 motif" evidence="1">
    <location>
        <begin position="627"/>
        <end position="695"/>
    </location>
</feature>
<feature type="binding site" evidence="1">
    <location>
        <position position="491"/>
    </location>
    <ligand>
        <name>Mg(2+)</name>
        <dbReference type="ChEBI" id="CHEBI:18420"/>
    </ligand>
</feature>
<feature type="binding site" evidence="1">
    <location>
        <position position="497"/>
    </location>
    <ligand>
        <name>Mg(2+)</name>
        <dbReference type="ChEBI" id="CHEBI:18420"/>
    </ligand>
</feature>
<dbReference type="EC" id="2.7.7.8" evidence="1"/>
<dbReference type="EMBL" id="CP000713">
    <property type="protein sequence ID" value="ABQ93123.1"/>
    <property type="molecule type" value="Genomic_DNA"/>
</dbReference>
<dbReference type="SMR" id="A5WBT2"/>
<dbReference type="STRING" id="349106.PsycPRwf_0164"/>
<dbReference type="KEGG" id="prw:PsycPRwf_0164"/>
<dbReference type="eggNOG" id="COG1185">
    <property type="taxonomic scope" value="Bacteria"/>
</dbReference>
<dbReference type="HOGENOM" id="CLU_004217_2_2_6"/>
<dbReference type="GO" id="GO:0005829">
    <property type="term" value="C:cytosol"/>
    <property type="evidence" value="ECO:0007669"/>
    <property type="project" value="TreeGrafter"/>
</dbReference>
<dbReference type="GO" id="GO:0000175">
    <property type="term" value="F:3'-5'-RNA exonuclease activity"/>
    <property type="evidence" value="ECO:0007669"/>
    <property type="project" value="TreeGrafter"/>
</dbReference>
<dbReference type="GO" id="GO:0000287">
    <property type="term" value="F:magnesium ion binding"/>
    <property type="evidence" value="ECO:0007669"/>
    <property type="project" value="UniProtKB-UniRule"/>
</dbReference>
<dbReference type="GO" id="GO:0004654">
    <property type="term" value="F:polyribonucleotide nucleotidyltransferase activity"/>
    <property type="evidence" value="ECO:0007669"/>
    <property type="project" value="UniProtKB-UniRule"/>
</dbReference>
<dbReference type="GO" id="GO:0003723">
    <property type="term" value="F:RNA binding"/>
    <property type="evidence" value="ECO:0007669"/>
    <property type="project" value="UniProtKB-UniRule"/>
</dbReference>
<dbReference type="GO" id="GO:0006402">
    <property type="term" value="P:mRNA catabolic process"/>
    <property type="evidence" value="ECO:0007669"/>
    <property type="project" value="UniProtKB-UniRule"/>
</dbReference>
<dbReference type="GO" id="GO:0006396">
    <property type="term" value="P:RNA processing"/>
    <property type="evidence" value="ECO:0007669"/>
    <property type="project" value="InterPro"/>
</dbReference>
<dbReference type="CDD" id="cd02393">
    <property type="entry name" value="KH-I_PNPase"/>
    <property type="match status" value="1"/>
</dbReference>
<dbReference type="CDD" id="cd11363">
    <property type="entry name" value="RNase_PH_PNPase_1"/>
    <property type="match status" value="1"/>
</dbReference>
<dbReference type="CDD" id="cd11364">
    <property type="entry name" value="RNase_PH_PNPase_2"/>
    <property type="match status" value="1"/>
</dbReference>
<dbReference type="CDD" id="cd04472">
    <property type="entry name" value="S1_PNPase"/>
    <property type="match status" value="1"/>
</dbReference>
<dbReference type="FunFam" id="2.40.50.140:FF:000023">
    <property type="entry name" value="Polyribonucleotide nucleotidyltransferase"/>
    <property type="match status" value="1"/>
</dbReference>
<dbReference type="FunFam" id="3.30.1370.10:FF:000001">
    <property type="entry name" value="Polyribonucleotide nucleotidyltransferase"/>
    <property type="match status" value="1"/>
</dbReference>
<dbReference type="FunFam" id="3.30.230.70:FF:000001">
    <property type="entry name" value="Polyribonucleotide nucleotidyltransferase"/>
    <property type="match status" value="1"/>
</dbReference>
<dbReference type="FunFam" id="3.30.230.70:FF:000002">
    <property type="entry name" value="Polyribonucleotide nucleotidyltransferase"/>
    <property type="match status" value="1"/>
</dbReference>
<dbReference type="Gene3D" id="3.30.230.70">
    <property type="entry name" value="GHMP Kinase, N-terminal domain"/>
    <property type="match status" value="2"/>
</dbReference>
<dbReference type="Gene3D" id="3.30.1370.10">
    <property type="entry name" value="K Homology domain, type 1"/>
    <property type="match status" value="1"/>
</dbReference>
<dbReference type="Gene3D" id="2.40.50.140">
    <property type="entry name" value="Nucleic acid-binding proteins"/>
    <property type="match status" value="1"/>
</dbReference>
<dbReference type="HAMAP" id="MF_01595">
    <property type="entry name" value="PNPase"/>
    <property type="match status" value="1"/>
</dbReference>
<dbReference type="InterPro" id="IPR001247">
    <property type="entry name" value="ExoRNase_PH_dom1"/>
</dbReference>
<dbReference type="InterPro" id="IPR015847">
    <property type="entry name" value="ExoRNase_PH_dom2"/>
</dbReference>
<dbReference type="InterPro" id="IPR036345">
    <property type="entry name" value="ExoRNase_PH_dom2_sf"/>
</dbReference>
<dbReference type="InterPro" id="IPR004087">
    <property type="entry name" value="KH_dom"/>
</dbReference>
<dbReference type="InterPro" id="IPR004088">
    <property type="entry name" value="KH_dom_type_1"/>
</dbReference>
<dbReference type="InterPro" id="IPR036612">
    <property type="entry name" value="KH_dom_type_1_sf"/>
</dbReference>
<dbReference type="InterPro" id="IPR012340">
    <property type="entry name" value="NA-bd_OB-fold"/>
</dbReference>
<dbReference type="InterPro" id="IPR012162">
    <property type="entry name" value="PNPase"/>
</dbReference>
<dbReference type="InterPro" id="IPR027408">
    <property type="entry name" value="PNPase/RNase_PH_dom_sf"/>
</dbReference>
<dbReference type="InterPro" id="IPR015848">
    <property type="entry name" value="PNPase_PH_RNA-bd_bac/org-type"/>
</dbReference>
<dbReference type="InterPro" id="IPR020568">
    <property type="entry name" value="Ribosomal_Su5_D2-typ_SF"/>
</dbReference>
<dbReference type="InterPro" id="IPR003029">
    <property type="entry name" value="S1_domain"/>
</dbReference>
<dbReference type="NCBIfam" id="TIGR03591">
    <property type="entry name" value="polynuc_phos"/>
    <property type="match status" value="1"/>
</dbReference>
<dbReference type="NCBIfam" id="NF008805">
    <property type="entry name" value="PRK11824.1"/>
    <property type="match status" value="1"/>
</dbReference>
<dbReference type="PANTHER" id="PTHR11252">
    <property type="entry name" value="POLYRIBONUCLEOTIDE NUCLEOTIDYLTRANSFERASE"/>
    <property type="match status" value="1"/>
</dbReference>
<dbReference type="PANTHER" id="PTHR11252:SF0">
    <property type="entry name" value="POLYRIBONUCLEOTIDE NUCLEOTIDYLTRANSFERASE 1, MITOCHONDRIAL"/>
    <property type="match status" value="1"/>
</dbReference>
<dbReference type="Pfam" id="PF00013">
    <property type="entry name" value="KH_1"/>
    <property type="match status" value="1"/>
</dbReference>
<dbReference type="Pfam" id="PF03726">
    <property type="entry name" value="PNPase"/>
    <property type="match status" value="1"/>
</dbReference>
<dbReference type="Pfam" id="PF01138">
    <property type="entry name" value="RNase_PH"/>
    <property type="match status" value="2"/>
</dbReference>
<dbReference type="Pfam" id="PF03725">
    <property type="entry name" value="RNase_PH_C"/>
    <property type="match status" value="2"/>
</dbReference>
<dbReference type="Pfam" id="PF00575">
    <property type="entry name" value="S1"/>
    <property type="match status" value="1"/>
</dbReference>
<dbReference type="PIRSF" id="PIRSF005499">
    <property type="entry name" value="PNPase"/>
    <property type="match status" value="1"/>
</dbReference>
<dbReference type="SMART" id="SM00322">
    <property type="entry name" value="KH"/>
    <property type="match status" value="1"/>
</dbReference>
<dbReference type="SMART" id="SM00316">
    <property type="entry name" value="S1"/>
    <property type="match status" value="1"/>
</dbReference>
<dbReference type="SUPFAM" id="SSF54791">
    <property type="entry name" value="Eukaryotic type KH-domain (KH-domain type I)"/>
    <property type="match status" value="1"/>
</dbReference>
<dbReference type="SUPFAM" id="SSF50249">
    <property type="entry name" value="Nucleic acid-binding proteins"/>
    <property type="match status" value="1"/>
</dbReference>
<dbReference type="SUPFAM" id="SSF55666">
    <property type="entry name" value="Ribonuclease PH domain 2-like"/>
    <property type="match status" value="2"/>
</dbReference>
<dbReference type="SUPFAM" id="SSF54211">
    <property type="entry name" value="Ribosomal protein S5 domain 2-like"/>
    <property type="match status" value="2"/>
</dbReference>
<dbReference type="PROSITE" id="PS50084">
    <property type="entry name" value="KH_TYPE_1"/>
    <property type="match status" value="1"/>
</dbReference>
<dbReference type="PROSITE" id="PS50126">
    <property type="entry name" value="S1"/>
    <property type="match status" value="1"/>
</dbReference>
<proteinExistence type="inferred from homology"/>
<evidence type="ECO:0000255" key="1">
    <source>
        <dbReference type="HAMAP-Rule" id="MF_01595"/>
    </source>
</evidence>
<organism>
    <name type="scientific">Psychrobacter sp. (strain PRwf-1)</name>
    <dbReference type="NCBI Taxonomy" id="349106"/>
    <lineage>
        <taxon>Bacteria</taxon>
        <taxon>Pseudomonadati</taxon>
        <taxon>Pseudomonadota</taxon>
        <taxon>Gammaproteobacteria</taxon>
        <taxon>Moraxellales</taxon>
        <taxon>Moraxellaceae</taxon>
        <taxon>Psychrobacter</taxon>
    </lineage>
</organism>
<reference key="1">
    <citation type="submission" date="2007-05" db="EMBL/GenBank/DDBJ databases">
        <title>Complete sequence of chromosome of Psychrobacter sp. PRwf-1.</title>
        <authorList>
            <consortium name="US DOE Joint Genome Institute"/>
            <person name="Copeland A."/>
            <person name="Lucas S."/>
            <person name="Lapidus A."/>
            <person name="Barry K."/>
            <person name="Detter J.C."/>
            <person name="Glavina del Rio T."/>
            <person name="Hammon N."/>
            <person name="Israni S."/>
            <person name="Dalin E."/>
            <person name="Tice H."/>
            <person name="Pitluck S."/>
            <person name="Chain P."/>
            <person name="Malfatti S."/>
            <person name="Shin M."/>
            <person name="Vergez L."/>
            <person name="Schmutz J."/>
            <person name="Larimer F."/>
            <person name="Land M."/>
            <person name="Hauser L."/>
            <person name="Kyrpides N."/>
            <person name="Kim E."/>
            <person name="Tiedje J."/>
            <person name="Richardson P."/>
        </authorList>
    </citation>
    <scope>NUCLEOTIDE SEQUENCE [LARGE SCALE GENOMIC DNA]</scope>
    <source>
        <strain>PRwf-1</strain>
    </source>
</reference>
<gene>
    <name evidence="1" type="primary">pnp</name>
    <name type="ordered locus">PsycPRwf_0164</name>
</gene>
<name>PNP_PSYWF</name>
<accession>A5WBT2</accession>
<sequence>MSMFNTISREFQYGNEQVVIETGRIARQANSVLVHMGGVSVLVAVVVKSDAKEGQNFFPLTVNYQEKMYAAGKIPGAYGKREGRPTEFETLTSRLIDRPIRPLFPEGYVNEIQITATVISSDKKHYADIAAMIGASAALSISDAPFNGPIGGARVGFINGEYVLNPSIEELKSSDLDLVVAGTKSAVLMVESEAAELSEDQMLGAVLYGHEQQQIVIDNIAELAKAVGTQKQDFVAPELNAELKEKVTTQFGEQVAEAYAISDKQARYEKLDEIKAAAIDALAGDPESEEFAEKEAQIKEIYNDLKYRTVRDAILSGKPRIDGRDLDTVRALDIQVGVLPYTHGSALFTRGETQALVTTTLGNSRDVNLIDSLAGTIQDHFMLHYNFPHYSVGETGREGVPKRREIGHGRLARRGVQAMLPDSDRFPYVIRVVSEITESNGSSSMASVCGASLALMDAGVPLKAPVAGIAMGLVKEGDRFAVLSDILGDEDHLGDMDFKVAGTKDGITALQMDIKIEGITSDIMEKALEQAHAGRIHILNAMNEVLPASRTEINAHAPNYAVIEINSDKIRDVIGKGGATIRQLTEDTGAVIDIDDNGTIRIFGENKAATKEAIRQIEAITAEVEVGKVYKGTVARVVDFGAFVTVLPGTDGLVHISQIADERVESVSDYLSEGQQINVLVQDVDNRGRIKLTMKGVEQEQTQA</sequence>
<keyword id="KW-0963">Cytoplasm</keyword>
<keyword id="KW-0460">Magnesium</keyword>
<keyword id="KW-0479">Metal-binding</keyword>
<keyword id="KW-0548">Nucleotidyltransferase</keyword>
<keyword id="KW-0694">RNA-binding</keyword>
<keyword id="KW-0808">Transferase</keyword>
<protein>
    <recommendedName>
        <fullName evidence="1">Polyribonucleotide nucleotidyltransferase</fullName>
        <ecNumber evidence="1">2.7.7.8</ecNumber>
    </recommendedName>
    <alternativeName>
        <fullName evidence="1">Polynucleotide phosphorylase</fullName>
        <shortName evidence="1">PNPase</shortName>
    </alternativeName>
</protein>